<accession>Q2L2S3</accession>
<comment type="function">
    <text evidence="1">Specifically methylates the N7 position of guanine in position 527 of 16S rRNA.</text>
</comment>
<comment type="catalytic activity">
    <reaction evidence="1">
        <text>guanosine(527) in 16S rRNA + S-adenosyl-L-methionine = N(7)-methylguanosine(527) in 16S rRNA + S-adenosyl-L-homocysteine</text>
        <dbReference type="Rhea" id="RHEA:42732"/>
        <dbReference type="Rhea" id="RHEA-COMP:10209"/>
        <dbReference type="Rhea" id="RHEA-COMP:10210"/>
        <dbReference type="ChEBI" id="CHEBI:57856"/>
        <dbReference type="ChEBI" id="CHEBI:59789"/>
        <dbReference type="ChEBI" id="CHEBI:74269"/>
        <dbReference type="ChEBI" id="CHEBI:74480"/>
        <dbReference type="EC" id="2.1.1.170"/>
    </reaction>
</comment>
<comment type="subcellular location">
    <subcellularLocation>
        <location evidence="1">Cytoplasm</location>
    </subcellularLocation>
</comment>
<comment type="similarity">
    <text evidence="1">Belongs to the methyltransferase superfamily. RNA methyltransferase RsmG family.</text>
</comment>
<dbReference type="EC" id="2.1.1.170" evidence="1"/>
<dbReference type="EMBL" id="AM167904">
    <property type="protein sequence ID" value="CAJ47586.1"/>
    <property type="molecule type" value="Genomic_DNA"/>
</dbReference>
<dbReference type="RefSeq" id="WP_012415713.1">
    <property type="nucleotide sequence ID" value="NC_010645.1"/>
</dbReference>
<dbReference type="SMR" id="Q2L2S3"/>
<dbReference type="STRING" id="360910.BAV0002"/>
<dbReference type="GeneID" id="92936757"/>
<dbReference type="KEGG" id="bav:BAV0002"/>
<dbReference type="eggNOG" id="COG0357">
    <property type="taxonomic scope" value="Bacteria"/>
</dbReference>
<dbReference type="HOGENOM" id="CLU_065341_2_0_4"/>
<dbReference type="OrthoDB" id="9808773at2"/>
<dbReference type="Proteomes" id="UP000001977">
    <property type="component" value="Chromosome"/>
</dbReference>
<dbReference type="GO" id="GO:0005829">
    <property type="term" value="C:cytosol"/>
    <property type="evidence" value="ECO:0007669"/>
    <property type="project" value="TreeGrafter"/>
</dbReference>
<dbReference type="GO" id="GO:0070043">
    <property type="term" value="F:rRNA (guanine-N7-)-methyltransferase activity"/>
    <property type="evidence" value="ECO:0007669"/>
    <property type="project" value="UniProtKB-UniRule"/>
</dbReference>
<dbReference type="CDD" id="cd02440">
    <property type="entry name" value="AdoMet_MTases"/>
    <property type="match status" value="1"/>
</dbReference>
<dbReference type="Gene3D" id="3.40.50.150">
    <property type="entry name" value="Vaccinia Virus protein VP39"/>
    <property type="match status" value="1"/>
</dbReference>
<dbReference type="HAMAP" id="MF_00074">
    <property type="entry name" value="16SrRNA_methyltr_G"/>
    <property type="match status" value="1"/>
</dbReference>
<dbReference type="InterPro" id="IPR003682">
    <property type="entry name" value="rRNA_ssu_MeTfrase_G"/>
</dbReference>
<dbReference type="InterPro" id="IPR029063">
    <property type="entry name" value="SAM-dependent_MTases_sf"/>
</dbReference>
<dbReference type="NCBIfam" id="TIGR00138">
    <property type="entry name" value="rsmG_gidB"/>
    <property type="match status" value="1"/>
</dbReference>
<dbReference type="PANTHER" id="PTHR31760">
    <property type="entry name" value="S-ADENOSYL-L-METHIONINE-DEPENDENT METHYLTRANSFERASES SUPERFAMILY PROTEIN"/>
    <property type="match status" value="1"/>
</dbReference>
<dbReference type="PANTHER" id="PTHR31760:SF0">
    <property type="entry name" value="S-ADENOSYL-L-METHIONINE-DEPENDENT METHYLTRANSFERASES SUPERFAMILY PROTEIN"/>
    <property type="match status" value="1"/>
</dbReference>
<dbReference type="Pfam" id="PF02527">
    <property type="entry name" value="GidB"/>
    <property type="match status" value="1"/>
</dbReference>
<dbReference type="PIRSF" id="PIRSF003078">
    <property type="entry name" value="GidB"/>
    <property type="match status" value="1"/>
</dbReference>
<dbReference type="SUPFAM" id="SSF53335">
    <property type="entry name" value="S-adenosyl-L-methionine-dependent methyltransferases"/>
    <property type="match status" value="1"/>
</dbReference>
<sequence>MSTMPEDIAAAQRLEQACQSLGLAAGAEQQEKLLRYMAQMQRWNRTYNLTAIRDPEQMLIQHLFDSLSVVQPLVRALQAGQPAKVYDVGSGGGLPGVVLAIVQPEWDITCVDAVEKKTAFVQQMAGTLMLPNLHAMHARIERVAPADCDVVISRAFASLHDFANLAGRHVRPGGTLVAMKGKVPAEEIEGLPAAWQVERIEPLQVPELDAERCLIWMRRSQGTL</sequence>
<organism>
    <name type="scientific">Bordetella avium (strain 197N)</name>
    <dbReference type="NCBI Taxonomy" id="360910"/>
    <lineage>
        <taxon>Bacteria</taxon>
        <taxon>Pseudomonadati</taxon>
        <taxon>Pseudomonadota</taxon>
        <taxon>Betaproteobacteria</taxon>
        <taxon>Burkholderiales</taxon>
        <taxon>Alcaligenaceae</taxon>
        <taxon>Bordetella</taxon>
    </lineage>
</organism>
<evidence type="ECO:0000255" key="1">
    <source>
        <dbReference type="HAMAP-Rule" id="MF_00074"/>
    </source>
</evidence>
<gene>
    <name evidence="1" type="primary">rsmG</name>
    <name type="ordered locus">BAV0002</name>
</gene>
<keyword id="KW-0963">Cytoplasm</keyword>
<keyword id="KW-0489">Methyltransferase</keyword>
<keyword id="KW-1185">Reference proteome</keyword>
<keyword id="KW-0698">rRNA processing</keyword>
<keyword id="KW-0949">S-adenosyl-L-methionine</keyword>
<keyword id="KW-0808">Transferase</keyword>
<reference key="1">
    <citation type="journal article" date="2006" name="J. Bacteriol.">
        <title>Comparison of the genome sequence of the poultry pathogen Bordetella avium with those of B. bronchiseptica, B. pertussis, and B. parapertussis reveals extensive diversity in surface structures associated with host interaction.</title>
        <authorList>
            <person name="Sebaihia M."/>
            <person name="Preston A."/>
            <person name="Maskell D.J."/>
            <person name="Kuzmiak H."/>
            <person name="Connell T.D."/>
            <person name="King N.D."/>
            <person name="Orndorff P.E."/>
            <person name="Miyamoto D.M."/>
            <person name="Thomson N.R."/>
            <person name="Harris D."/>
            <person name="Goble A."/>
            <person name="Lord A."/>
            <person name="Murphy L."/>
            <person name="Quail M.A."/>
            <person name="Rutter S."/>
            <person name="Squares R."/>
            <person name="Squares S."/>
            <person name="Woodward J."/>
            <person name="Parkhill J."/>
            <person name="Temple L.M."/>
        </authorList>
    </citation>
    <scope>NUCLEOTIDE SEQUENCE [LARGE SCALE GENOMIC DNA]</scope>
    <source>
        <strain>197N</strain>
    </source>
</reference>
<name>RSMG_BORA1</name>
<feature type="chain" id="PRO_1000010125" description="Ribosomal RNA small subunit methyltransferase G">
    <location>
        <begin position="1"/>
        <end position="224"/>
    </location>
</feature>
<feature type="binding site" evidence="1">
    <location>
        <position position="89"/>
    </location>
    <ligand>
        <name>S-adenosyl-L-methionine</name>
        <dbReference type="ChEBI" id="CHEBI:59789"/>
    </ligand>
</feature>
<feature type="binding site" evidence="1">
    <location>
        <position position="94"/>
    </location>
    <ligand>
        <name>S-adenosyl-L-methionine</name>
        <dbReference type="ChEBI" id="CHEBI:59789"/>
    </ligand>
</feature>
<feature type="binding site" evidence="1">
    <location>
        <begin position="140"/>
        <end position="141"/>
    </location>
    <ligand>
        <name>S-adenosyl-L-methionine</name>
        <dbReference type="ChEBI" id="CHEBI:59789"/>
    </ligand>
</feature>
<feature type="binding site" evidence="1">
    <location>
        <position position="154"/>
    </location>
    <ligand>
        <name>S-adenosyl-L-methionine</name>
        <dbReference type="ChEBI" id="CHEBI:59789"/>
    </ligand>
</feature>
<protein>
    <recommendedName>
        <fullName evidence="1">Ribosomal RNA small subunit methyltransferase G</fullName>
        <ecNumber evidence="1">2.1.1.170</ecNumber>
    </recommendedName>
    <alternativeName>
        <fullName evidence="1">16S rRNA 7-methylguanosine methyltransferase</fullName>
        <shortName evidence="1">16S rRNA m7G methyltransferase</shortName>
    </alternativeName>
</protein>
<proteinExistence type="inferred from homology"/>